<feature type="chain" id="PRO_1000199133" description="Histidine--tRNA ligase">
    <location>
        <begin position="1"/>
        <end position="424"/>
    </location>
</feature>
<proteinExistence type="inferred from homology"/>
<accession>B7MHZ9</accession>
<keyword id="KW-0030">Aminoacyl-tRNA synthetase</keyword>
<keyword id="KW-0067">ATP-binding</keyword>
<keyword id="KW-0963">Cytoplasm</keyword>
<keyword id="KW-0436">Ligase</keyword>
<keyword id="KW-0547">Nucleotide-binding</keyword>
<keyword id="KW-0648">Protein biosynthesis</keyword>
<keyword id="KW-1185">Reference proteome</keyword>
<protein>
    <recommendedName>
        <fullName evidence="1">Histidine--tRNA ligase</fullName>
        <ecNumber evidence="1">6.1.1.21</ecNumber>
    </recommendedName>
    <alternativeName>
        <fullName evidence="1">Histidyl-tRNA synthetase</fullName>
        <shortName evidence="1">HisRS</shortName>
    </alternativeName>
</protein>
<evidence type="ECO:0000255" key="1">
    <source>
        <dbReference type="HAMAP-Rule" id="MF_00127"/>
    </source>
</evidence>
<sequence>MAKNIQAIRGMNDYLPGETAIWQRIEGTLKNVLGSYGYSEIRLPIVEQTPLFKRAIGEVTDVVEKEMYTFEDRNGDSLTLRPEGTAGCVRAGIEHGLLYNQEQRLWYIGPMFRHERPQKGRYRQFHQLGCEVFGLQGPDIDAELIMLTARWWRALGISEHVTLELNSIGSLEARANYRDALVAFLEQHKEKLDEDCKRRMYTNPLRVLDSKNPEVQALLNDAPALGDYLDEESREHFAGLCKLLESAGIAYTVNQRLVRGLDYYNRTVFEWVTNSLGSQGTVCAGGRYDGLVEQLGGRATPAVGFAMGLERLVLLVQAVNPEFKADPVVDIYLVASGADTQSAAMALAERLRDELPGVKLMTNHGGGNFKKQFARADKWGARVAVVLGESEVANGTAVVKDLRSGEQTAVAQDSVAAHLRTLLG</sequence>
<organism>
    <name type="scientific">Escherichia coli O45:K1 (strain S88 / ExPEC)</name>
    <dbReference type="NCBI Taxonomy" id="585035"/>
    <lineage>
        <taxon>Bacteria</taxon>
        <taxon>Pseudomonadati</taxon>
        <taxon>Pseudomonadota</taxon>
        <taxon>Gammaproteobacteria</taxon>
        <taxon>Enterobacterales</taxon>
        <taxon>Enterobacteriaceae</taxon>
        <taxon>Escherichia</taxon>
    </lineage>
</organism>
<gene>
    <name evidence="1" type="primary">hisS</name>
    <name type="ordered locus">ECS88_2690</name>
</gene>
<name>SYH_ECO45</name>
<reference key="1">
    <citation type="journal article" date="2009" name="PLoS Genet.">
        <title>Organised genome dynamics in the Escherichia coli species results in highly diverse adaptive paths.</title>
        <authorList>
            <person name="Touchon M."/>
            <person name="Hoede C."/>
            <person name="Tenaillon O."/>
            <person name="Barbe V."/>
            <person name="Baeriswyl S."/>
            <person name="Bidet P."/>
            <person name="Bingen E."/>
            <person name="Bonacorsi S."/>
            <person name="Bouchier C."/>
            <person name="Bouvet O."/>
            <person name="Calteau A."/>
            <person name="Chiapello H."/>
            <person name="Clermont O."/>
            <person name="Cruveiller S."/>
            <person name="Danchin A."/>
            <person name="Diard M."/>
            <person name="Dossat C."/>
            <person name="Karoui M.E."/>
            <person name="Frapy E."/>
            <person name="Garry L."/>
            <person name="Ghigo J.M."/>
            <person name="Gilles A.M."/>
            <person name="Johnson J."/>
            <person name="Le Bouguenec C."/>
            <person name="Lescat M."/>
            <person name="Mangenot S."/>
            <person name="Martinez-Jehanne V."/>
            <person name="Matic I."/>
            <person name="Nassif X."/>
            <person name="Oztas S."/>
            <person name="Petit M.A."/>
            <person name="Pichon C."/>
            <person name="Rouy Z."/>
            <person name="Ruf C.S."/>
            <person name="Schneider D."/>
            <person name="Tourret J."/>
            <person name="Vacherie B."/>
            <person name="Vallenet D."/>
            <person name="Medigue C."/>
            <person name="Rocha E.P.C."/>
            <person name="Denamur E."/>
        </authorList>
    </citation>
    <scope>NUCLEOTIDE SEQUENCE [LARGE SCALE GENOMIC DNA]</scope>
    <source>
        <strain>S88 / ExPEC</strain>
    </source>
</reference>
<comment type="catalytic activity">
    <reaction evidence="1">
        <text>tRNA(His) + L-histidine + ATP = L-histidyl-tRNA(His) + AMP + diphosphate + H(+)</text>
        <dbReference type="Rhea" id="RHEA:17313"/>
        <dbReference type="Rhea" id="RHEA-COMP:9665"/>
        <dbReference type="Rhea" id="RHEA-COMP:9689"/>
        <dbReference type="ChEBI" id="CHEBI:15378"/>
        <dbReference type="ChEBI" id="CHEBI:30616"/>
        <dbReference type="ChEBI" id="CHEBI:33019"/>
        <dbReference type="ChEBI" id="CHEBI:57595"/>
        <dbReference type="ChEBI" id="CHEBI:78442"/>
        <dbReference type="ChEBI" id="CHEBI:78527"/>
        <dbReference type="ChEBI" id="CHEBI:456215"/>
        <dbReference type="EC" id="6.1.1.21"/>
    </reaction>
</comment>
<comment type="subunit">
    <text evidence="1">Homodimer.</text>
</comment>
<comment type="subcellular location">
    <subcellularLocation>
        <location evidence="1">Cytoplasm</location>
    </subcellularLocation>
</comment>
<comment type="similarity">
    <text evidence="1">Belongs to the class-II aminoacyl-tRNA synthetase family.</text>
</comment>
<dbReference type="EC" id="6.1.1.21" evidence="1"/>
<dbReference type="EMBL" id="CU928161">
    <property type="protein sequence ID" value="CAR03957.1"/>
    <property type="molecule type" value="Genomic_DNA"/>
</dbReference>
<dbReference type="RefSeq" id="WP_001107167.1">
    <property type="nucleotide sequence ID" value="NC_011742.1"/>
</dbReference>
<dbReference type="SMR" id="B7MHZ9"/>
<dbReference type="GeneID" id="75206207"/>
<dbReference type="KEGG" id="ecz:ECS88_2690"/>
<dbReference type="HOGENOM" id="CLU_025113_1_1_6"/>
<dbReference type="Proteomes" id="UP000000747">
    <property type="component" value="Chromosome"/>
</dbReference>
<dbReference type="GO" id="GO:0005737">
    <property type="term" value="C:cytoplasm"/>
    <property type="evidence" value="ECO:0007669"/>
    <property type="project" value="UniProtKB-SubCell"/>
</dbReference>
<dbReference type="GO" id="GO:0005524">
    <property type="term" value="F:ATP binding"/>
    <property type="evidence" value="ECO:0007669"/>
    <property type="project" value="UniProtKB-UniRule"/>
</dbReference>
<dbReference type="GO" id="GO:0004821">
    <property type="term" value="F:histidine-tRNA ligase activity"/>
    <property type="evidence" value="ECO:0007669"/>
    <property type="project" value="UniProtKB-UniRule"/>
</dbReference>
<dbReference type="GO" id="GO:0006427">
    <property type="term" value="P:histidyl-tRNA aminoacylation"/>
    <property type="evidence" value="ECO:0007669"/>
    <property type="project" value="UniProtKB-UniRule"/>
</dbReference>
<dbReference type="CDD" id="cd00773">
    <property type="entry name" value="HisRS-like_core"/>
    <property type="match status" value="1"/>
</dbReference>
<dbReference type="CDD" id="cd00859">
    <property type="entry name" value="HisRS_anticodon"/>
    <property type="match status" value="1"/>
</dbReference>
<dbReference type="FunFam" id="3.30.930.10:FF:000005">
    <property type="entry name" value="Histidine--tRNA ligase"/>
    <property type="match status" value="1"/>
</dbReference>
<dbReference type="FunFam" id="3.40.50.800:FF:000007">
    <property type="entry name" value="Histidine--tRNA ligase"/>
    <property type="match status" value="1"/>
</dbReference>
<dbReference type="Gene3D" id="3.40.50.800">
    <property type="entry name" value="Anticodon-binding domain"/>
    <property type="match status" value="1"/>
</dbReference>
<dbReference type="Gene3D" id="3.30.930.10">
    <property type="entry name" value="Bira Bifunctional Protein, Domain 2"/>
    <property type="match status" value="1"/>
</dbReference>
<dbReference type="HAMAP" id="MF_00127">
    <property type="entry name" value="His_tRNA_synth"/>
    <property type="match status" value="1"/>
</dbReference>
<dbReference type="InterPro" id="IPR006195">
    <property type="entry name" value="aa-tRNA-synth_II"/>
</dbReference>
<dbReference type="InterPro" id="IPR045864">
    <property type="entry name" value="aa-tRNA-synth_II/BPL/LPL"/>
</dbReference>
<dbReference type="InterPro" id="IPR004154">
    <property type="entry name" value="Anticodon-bd"/>
</dbReference>
<dbReference type="InterPro" id="IPR036621">
    <property type="entry name" value="Anticodon-bd_dom_sf"/>
</dbReference>
<dbReference type="InterPro" id="IPR015807">
    <property type="entry name" value="His-tRNA-ligase"/>
</dbReference>
<dbReference type="InterPro" id="IPR041715">
    <property type="entry name" value="HisRS-like_core"/>
</dbReference>
<dbReference type="InterPro" id="IPR004516">
    <property type="entry name" value="HisRS/HisZ"/>
</dbReference>
<dbReference type="InterPro" id="IPR033656">
    <property type="entry name" value="HisRS_anticodon"/>
</dbReference>
<dbReference type="NCBIfam" id="TIGR00442">
    <property type="entry name" value="hisS"/>
    <property type="match status" value="1"/>
</dbReference>
<dbReference type="PANTHER" id="PTHR43707:SF1">
    <property type="entry name" value="HISTIDINE--TRNA LIGASE, MITOCHONDRIAL-RELATED"/>
    <property type="match status" value="1"/>
</dbReference>
<dbReference type="PANTHER" id="PTHR43707">
    <property type="entry name" value="HISTIDYL-TRNA SYNTHETASE"/>
    <property type="match status" value="1"/>
</dbReference>
<dbReference type="Pfam" id="PF03129">
    <property type="entry name" value="HGTP_anticodon"/>
    <property type="match status" value="1"/>
</dbReference>
<dbReference type="Pfam" id="PF13393">
    <property type="entry name" value="tRNA-synt_His"/>
    <property type="match status" value="1"/>
</dbReference>
<dbReference type="PIRSF" id="PIRSF001549">
    <property type="entry name" value="His-tRNA_synth"/>
    <property type="match status" value="1"/>
</dbReference>
<dbReference type="SUPFAM" id="SSF52954">
    <property type="entry name" value="Class II aaRS ABD-related"/>
    <property type="match status" value="1"/>
</dbReference>
<dbReference type="SUPFAM" id="SSF55681">
    <property type="entry name" value="Class II aaRS and biotin synthetases"/>
    <property type="match status" value="1"/>
</dbReference>
<dbReference type="PROSITE" id="PS50862">
    <property type="entry name" value="AA_TRNA_LIGASE_II"/>
    <property type="match status" value="1"/>
</dbReference>